<dbReference type="EMBL" id="AJ297792">
    <property type="protein sequence ID" value="CAC82592.1"/>
    <property type="molecule type" value="mRNA"/>
</dbReference>
<dbReference type="EMBL" id="AY422170">
    <property type="protein sequence ID" value="AAR23799.1"/>
    <property type="molecule type" value="mRNA"/>
</dbReference>
<dbReference type="EMBL" id="AK292443">
    <property type="protein sequence ID" value="BAF85132.1"/>
    <property type="molecule type" value="mRNA"/>
</dbReference>
<dbReference type="EMBL" id="AL109824">
    <property type="status" value="NOT_ANNOTATED_CDS"/>
    <property type="molecule type" value="Genomic_DNA"/>
</dbReference>
<dbReference type="EMBL" id="CH471077">
    <property type="protein sequence ID" value="EAW76256.1"/>
    <property type="molecule type" value="Genomic_DNA"/>
</dbReference>
<dbReference type="EMBL" id="CH471077">
    <property type="protein sequence ID" value="EAW76257.1"/>
    <property type="molecule type" value="Genomic_DNA"/>
</dbReference>
<dbReference type="EMBL" id="BC035639">
    <property type="protein sequence ID" value="AAH35639.1"/>
    <property type="molecule type" value="mRNA"/>
</dbReference>
<dbReference type="CCDS" id="CCDS13240.1"/>
<dbReference type="RefSeq" id="NP_001316358.1">
    <property type="nucleotide sequence ID" value="NM_001329429.2"/>
</dbReference>
<dbReference type="RefSeq" id="NP_001316359.1">
    <property type="nucleotide sequence ID" value="NM_001329430.2"/>
</dbReference>
<dbReference type="RefSeq" id="NP_001316360.1">
    <property type="nucleotide sequence ID" value="NM_001329431.2"/>
</dbReference>
<dbReference type="RefSeq" id="NP_067025.1">
    <property type="nucleotide sequence ID" value="NM_021202.3"/>
</dbReference>
<dbReference type="PDB" id="7YO9">
    <property type="method" value="X-ray"/>
    <property type="resolution" value="1.75 A"/>
    <property type="chains" value="A=26-40"/>
</dbReference>
<dbReference type="PDB" id="8T31">
    <property type="method" value="X-ray"/>
    <property type="resolution" value="2.10 A"/>
    <property type="chains" value="B/D/F/H/J=31-43"/>
</dbReference>
<dbReference type="PDB" id="8T32">
    <property type="method" value="X-ray"/>
    <property type="resolution" value="2.05 A"/>
    <property type="chains" value="B=30-42"/>
</dbReference>
<dbReference type="PDB" id="8T33">
    <property type="method" value="X-ray"/>
    <property type="resolution" value="1.60 A"/>
    <property type="chains" value="B=31-43"/>
</dbReference>
<dbReference type="PDB" id="8T35">
    <property type="method" value="X-ray"/>
    <property type="resolution" value="1.90 A"/>
    <property type="chains" value="A/B=30-39"/>
</dbReference>
<dbReference type="PDB" id="8T36">
    <property type="method" value="X-ray"/>
    <property type="resolution" value="1.85 A"/>
    <property type="chains" value="A=29-39"/>
</dbReference>
<dbReference type="PDB" id="8T4T">
    <property type="method" value="X-ray"/>
    <property type="resolution" value="2.36 A"/>
    <property type="chains" value="A/B=29-39"/>
</dbReference>
<dbReference type="PDBsum" id="7YO9"/>
<dbReference type="PDBsum" id="8T31"/>
<dbReference type="PDBsum" id="8T32"/>
<dbReference type="PDBsum" id="8T33"/>
<dbReference type="PDBsum" id="8T35"/>
<dbReference type="PDBsum" id="8T36"/>
<dbReference type="PDBsum" id="8T4T"/>
<dbReference type="SMR" id="Q8IXH6"/>
<dbReference type="BioGRID" id="121809">
    <property type="interactions" value="6"/>
</dbReference>
<dbReference type="FunCoup" id="Q8IXH6">
    <property type="interactions" value="1730"/>
</dbReference>
<dbReference type="IntAct" id="Q8IXH6">
    <property type="interactions" value="4"/>
</dbReference>
<dbReference type="MINT" id="Q8IXH6"/>
<dbReference type="STRING" id="9606.ENSP00000363943"/>
<dbReference type="BindingDB" id="Q8IXH6"/>
<dbReference type="iPTMnet" id="Q8IXH6"/>
<dbReference type="PhosphoSitePlus" id="Q8IXH6"/>
<dbReference type="BioMuta" id="TP53INP2"/>
<dbReference type="jPOST" id="Q8IXH6"/>
<dbReference type="MassIVE" id="Q8IXH6"/>
<dbReference type="PaxDb" id="9606-ENSP00000363943"/>
<dbReference type="PeptideAtlas" id="Q8IXH6"/>
<dbReference type="ProteomicsDB" id="70992"/>
<dbReference type="Antibodypedia" id="43096">
    <property type="antibodies" value="181 antibodies from 20 providers"/>
</dbReference>
<dbReference type="DNASU" id="58476"/>
<dbReference type="Ensembl" id="ENST00000374809.6">
    <property type="protein sequence ID" value="ENSP00000363942.2"/>
    <property type="gene ID" value="ENSG00000078804.13"/>
</dbReference>
<dbReference type="Ensembl" id="ENST00000374810.8">
    <property type="protein sequence ID" value="ENSP00000363943.3"/>
    <property type="gene ID" value="ENSG00000078804.13"/>
</dbReference>
<dbReference type="GeneID" id="58476"/>
<dbReference type="KEGG" id="hsa:58476"/>
<dbReference type="MANE-Select" id="ENST00000374810.8">
    <property type="protein sequence ID" value="ENSP00000363943.3"/>
    <property type="RefSeq nucleotide sequence ID" value="NM_021202.3"/>
    <property type="RefSeq protein sequence ID" value="NP_067025.1"/>
</dbReference>
<dbReference type="UCSC" id="uc002xau.2">
    <property type="organism name" value="human"/>
</dbReference>
<dbReference type="AGR" id="HGNC:16104"/>
<dbReference type="CTD" id="58476"/>
<dbReference type="DisGeNET" id="58476"/>
<dbReference type="GeneCards" id="TP53INP2"/>
<dbReference type="HGNC" id="HGNC:16104">
    <property type="gene designation" value="TP53INP2"/>
</dbReference>
<dbReference type="HPA" id="ENSG00000078804">
    <property type="expression patterns" value="Tissue enriched (brain)"/>
</dbReference>
<dbReference type="MIM" id="617549">
    <property type="type" value="gene"/>
</dbReference>
<dbReference type="neXtProt" id="NX_Q8IXH6"/>
<dbReference type="OpenTargets" id="ENSG00000078804"/>
<dbReference type="PharmGKB" id="PA25650"/>
<dbReference type="VEuPathDB" id="HostDB:ENSG00000078804"/>
<dbReference type="eggNOG" id="ENOG502RZHB">
    <property type="taxonomic scope" value="Eukaryota"/>
</dbReference>
<dbReference type="GeneTree" id="ENSGT00530000063829"/>
<dbReference type="HOGENOM" id="CLU_091034_0_0_1"/>
<dbReference type="InParanoid" id="Q8IXH6"/>
<dbReference type="OMA" id="HQGSFIY"/>
<dbReference type="OrthoDB" id="10041339at2759"/>
<dbReference type="PAN-GO" id="Q8IXH6">
    <property type="GO annotations" value="4 GO annotations based on evolutionary models"/>
</dbReference>
<dbReference type="PhylomeDB" id="Q8IXH6"/>
<dbReference type="TreeFam" id="TF333017"/>
<dbReference type="PathwayCommons" id="Q8IXH6"/>
<dbReference type="SignaLink" id="Q8IXH6"/>
<dbReference type="SIGNOR" id="Q8IXH6"/>
<dbReference type="BioGRID-ORCS" id="58476">
    <property type="hits" value="21 hits in 1160 CRISPR screens"/>
</dbReference>
<dbReference type="ChiTaRS" id="TP53INP2">
    <property type="organism name" value="human"/>
</dbReference>
<dbReference type="GenomeRNAi" id="58476"/>
<dbReference type="Pharos" id="Q8IXH6">
    <property type="development level" value="Tbio"/>
</dbReference>
<dbReference type="PRO" id="PR:Q8IXH6"/>
<dbReference type="Proteomes" id="UP000005640">
    <property type="component" value="Chromosome 20"/>
</dbReference>
<dbReference type="RNAct" id="Q8IXH6">
    <property type="molecule type" value="protein"/>
</dbReference>
<dbReference type="Bgee" id="ENSG00000078804">
    <property type="expression patterns" value="Expressed in inferior vagus X ganglion and 189 other cell types or tissues"/>
</dbReference>
<dbReference type="ExpressionAtlas" id="Q8IXH6">
    <property type="expression patterns" value="baseline and differential"/>
</dbReference>
<dbReference type="GO" id="GO:0005776">
    <property type="term" value="C:autophagosome"/>
    <property type="evidence" value="ECO:0000314"/>
    <property type="project" value="UniProtKB"/>
</dbReference>
<dbReference type="GO" id="GO:0031410">
    <property type="term" value="C:cytoplasmic vesicle"/>
    <property type="evidence" value="ECO:0007669"/>
    <property type="project" value="UniProtKB-KW"/>
</dbReference>
<dbReference type="GO" id="GO:0005829">
    <property type="term" value="C:cytosol"/>
    <property type="evidence" value="ECO:0000314"/>
    <property type="project" value="UniProtKB"/>
</dbReference>
<dbReference type="GO" id="GO:0005634">
    <property type="term" value="C:nucleus"/>
    <property type="evidence" value="ECO:0000314"/>
    <property type="project" value="UniProtKB"/>
</dbReference>
<dbReference type="GO" id="GO:0016605">
    <property type="term" value="C:PML body"/>
    <property type="evidence" value="ECO:0007669"/>
    <property type="project" value="UniProtKB-SubCell"/>
</dbReference>
<dbReference type="GO" id="GO:0043130">
    <property type="term" value="F:ubiquitin binding"/>
    <property type="evidence" value="ECO:0007669"/>
    <property type="project" value="Ensembl"/>
</dbReference>
<dbReference type="GO" id="GO:0000045">
    <property type="term" value="P:autophagosome assembly"/>
    <property type="evidence" value="ECO:0000314"/>
    <property type="project" value="GO_Central"/>
</dbReference>
<dbReference type="GO" id="GO:1903828">
    <property type="term" value="P:negative regulation of protein localization"/>
    <property type="evidence" value="ECO:0007669"/>
    <property type="project" value="Ensembl"/>
</dbReference>
<dbReference type="GO" id="GO:0001649">
    <property type="term" value="P:osteoblast differentiation"/>
    <property type="evidence" value="ECO:0007669"/>
    <property type="project" value="Ensembl"/>
</dbReference>
<dbReference type="GO" id="GO:0045893">
    <property type="term" value="P:positive regulation of DNA-templated transcription"/>
    <property type="evidence" value="ECO:0000314"/>
    <property type="project" value="UniProtKB"/>
</dbReference>
<dbReference type="GO" id="GO:0008104">
    <property type="term" value="P:protein localization"/>
    <property type="evidence" value="ECO:0007669"/>
    <property type="project" value="Ensembl"/>
</dbReference>
<dbReference type="GO" id="GO:0001894">
    <property type="term" value="P:tissue homeostasis"/>
    <property type="evidence" value="ECO:0007669"/>
    <property type="project" value="Ensembl"/>
</dbReference>
<dbReference type="GO" id="GO:0006511">
    <property type="term" value="P:ubiquitin-dependent protein catabolic process"/>
    <property type="evidence" value="ECO:0007669"/>
    <property type="project" value="Ensembl"/>
</dbReference>
<dbReference type="InterPro" id="IPR029431">
    <property type="entry name" value="TP53INP"/>
</dbReference>
<dbReference type="PANTHER" id="PTHR31671">
    <property type="entry name" value="DIABETES AND OBESITY REGULATED, ISOFORM G"/>
    <property type="match status" value="1"/>
</dbReference>
<dbReference type="PANTHER" id="PTHR31671:SF2">
    <property type="entry name" value="TUMOR PROTEIN P53-INDUCIBLE NUCLEAR PROTEIN 2"/>
    <property type="match status" value="1"/>
</dbReference>
<dbReference type="Pfam" id="PF14839">
    <property type="entry name" value="DOR"/>
    <property type="match status" value="1"/>
</dbReference>
<evidence type="ECO:0000256" key="1">
    <source>
        <dbReference type="SAM" id="MobiDB-lite"/>
    </source>
</evidence>
<evidence type="ECO:0000269" key="2">
    <source>
    </source>
</evidence>
<evidence type="ECO:0000269" key="3">
    <source>
    </source>
</evidence>
<evidence type="ECO:0000269" key="4">
    <source>
    </source>
</evidence>
<evidence type="ECO:0000305" key="5"/>
<evidence type="ECO:0007744" key="6">
    <source>
    </source>
</evidence>
<evidence type="ECO:0007744" key="7">
    <source>
    </source>
</evidence>
<evidence type="ECO:0007829" key="8">
    <source>
        <dbReference type="PDB" id="7YO9"/>
    </source>
</evidence>
<feature type="chain" id="PRO_0000072409" description="Tumor protein p53-inducible nuclear protein 2">
    <location>
        <begin position="1"/>
        <end position="220"/>
    </location>
</feature>
<feature type="region of interest" description="Disordered" evidence="1">
    <location>
        <begin position="1"/>
        <end position="24"/>
    </location>
</feature>
<feature type="region of interest" description="Disordered" evidence="1">
    <location>
        <begin position="41"/>
        <end position="69"/>
    </location>
</feature>
<feature type="region of interest" description="Disordered" evidence="1">
    <location>
        <begin position="119"/>
        <end position="220"/>
    </location>
</feature>
<feature type="short sequence motif" description="LIR">
    <location>
        <begin position="26"/>
        <end position="41"/>
    </location>
</feature>
<feature type="compositionally biased region" description="Low complexity" evidence="1">
    <location>
        <begin position="1"/>
        <end position="12"/>
    </location>
</feature>
<feature type="compositionally biased region" description="Pro residues" evidence="1">
    <location>
        <begin position="47"/>
        <end position="64"/>
    </location>
</feature>
<feature type="compositionally biased region" description="Low complexity" evidence="1">
    <location>
        <begin position="152"/>
        <end position="170"/>
    </location>
</feature>
<feature type="compositionally biased region" description="Polar residues" evidence="1">
    <location>
        <begin position="205"/>
        <end position="220"/>
    </location>
</feature>
<feature type="modified residue" description="Phosphoserine" evidence="6">
    <location>
        <position position="14"/>
    </location>
</feature>
<feature type="modified residue" description="Phosphoserine" evidence="7">
    <location>
        <position position="136"/>
    </location>
</feature>
<feature type="sequence conflict" description="In Ref. 1; CAC82592." evidence="5" ref="1">
    <original>S</original>
    <variation>N</variation>
    <location>
        <position position="136"/>
    </location>
</feature>
<feature type="strand" evidence="8">
    <location>
        <begin position="28"/>
        <end position="32"/>
    </location>
</feature>
<feature type="strand" evidence="8">
    <location>
        <begin position="35"/>
        <end position="39"/>
    </location>
</feature>
<accession>Q8IXH6</accession>
<accession>A8K8S8</accession>
<accession>E1P5P6</accession>
<accession>Q5JX64</accession>
<accession>Q8IYL5</accession>
<accession>Q9NU00</accession>
<reference key="1">
    <citation type="journal article" date="2007" name="PLoS ONE">
        <title>Identification of a novel modulator of thyroid hormone receptor-mediated action.</title>
        <authorList>
            <person name="Baumgartner B.G."/>
            <person name="Orpinell M."/>
            <person name="Duran J."/>
            <person name="Ribas V."/>
            <person name="Burghardt H.E."/>
            <person name="Bach D."/>
            <person name="Villar A.V."/>
            <person name="Paz J.C."/>
            <person name="Gonzalez M."/>
            <person name="Camps M."/>
            <person name="Oriola J."/>
            <person name="Rivera F."/>
            <person name="Palacin M."/>
            <person name="Zorzano A."/>
        </authorList>
    </citation>
    <scope>NUCLEOTIDE SEQUENCE [MRNA]</scope>
    <scope>FUNCTION</scope>
    <scope>SUBCELLULAR LOCATION</scope>
    <scope>TISSUE SPECIFICITY</scope>
    <scope>INTERACTION WITH THRA</scope>
    <source>
        <tissue>Heart</tissue>
    </source>
</reference>
<reference key="2">
    <citation type="submission" date="2003-09" db="EMBL/GenBank/DDBJ databases">
        <title>PIG-U is a novel oncogene in human bladder cancer.</title>
        <authorList>
            <person name="Guo Z."/>
            <person name="Wu G."/>
            <person name="Sidransky D."/>
            <person name="Trink B."/>
        </authorList>
    </citation>
    <scope>NUCLEOTIDE SEQUENCE [MRNA]</scope>
</reference>
<reference key="3">
    <citation type="journal article" date="2004" name="Nat. Genet.">
        <title>Complete sequencing and characterization of 21,243 full-length human cDNAs.</title>
        <authorList>
            <person name="Ota T."/>
            <person name="Suzuki Y."/>
            <person name="Nishikawa T."/>
            <person name="Otsuki T."/>
            <person name="Sugiyama T."/>
            <person name="Irie R."/>
            <person name="Wakamatsu A."/>
            <person name="Hayashi K."/>
            <person name="Sato H."/>
            <person name="Nagai K."/>
            <person name="Kimura K."/>
            <person name="Makita H."/>
            <person name="Sekine M."/>
            <person name="Obayashi M."/>
            <person name="Nishi T."/>
            <person name="Shibahara T."/>
            <person name="Tanaka T."/>
            <person name="Ishii S."/>
            <person name="Yamamoto J."/>
            <person name="Saito K."/>
            <person name="Kawai Y."/>
            <person name="Isono Y."/>
            <person name="Nakamura Y."/>
            <person name="Nagahari K."/>
            <person name="Murakami K."/>
            <person name="Yasuda T."/>
            <person name="Iwayanagi T."/>
            <person name="Wagatsuma M."/>
            <person name="Shiratori A."/>
            <person name="Sudo H."/>
            <person name="Hosoiri T."/>
            <person name="Kaku Y."/>
            <person name="Kodaira H."/>
            <person name="Kondo H."/>
            <person name="Sugawara M."/>
            <person name="Takahashi M."/>
            <person name="Kanda K."/>
            <person name="Yokoi T."/>
            <person name="Furuya T."/>
            <person name="Kikkawa E."/>
            <person name="Omura Y."/>
            <person name="Abe K."/>
            <person name="Kamihara K."/>
            <person name="Katsuta N."/>
            <person name="Sato K."/>
            <person name="Tanikawa M."/>
            <person name="Yamazaki M."/>
            <person name="Ninomiya K."/>
            <person name="Ishibashi T."/>
            <person name="Yamashita H."/>
            <person name="Murakawa K."/>
            <person name="Fujimori K."/>
            <person name="Tanai H."/>
            <person name="Kimata M."/>
            <person name="Watanabe M."/>
            <person name="Hiraoka S."/>
            <person name="Chiba Y."/>
            <person name="Ishida S."/>
            <person name="Ono Y."/>
            <person name="Takiguchi S."/>
            <person name="Watanabe S."/>
            <person name="Yosida M."/>
            <person name="Hotuta T."/>
            <person name="Kusano J."/>
            <person name="Kanehori K."/>
            <person name="Takahashi-Fujii A."/>
            <person name="Hara H."/>
            <person name="Tanase T.-O."/>
            <person name="Nomura Y."/>
            <person name="Togiya S."/>
            <person name="Komai F."/>
            <person name="Hara R."/>
            <person name="Takeuchi K."/>
            <person name="Arita M."/>
            <person name="Imose N."/>
            <person name="Musashino K."/>
            <person name="Yuuki H."/>
            <person name="Oshima A."/>
            <person name="Sasaki N."/>
            <person name="Aotsuka S."/>
            <person name="Yoshikawa Y."/>
            <person name="Matsunawa H."/>
            <person name="Ichihara T."/>
            <person name="Shiohata N."/>
            <person name="Sano S."/>
            <person name="Moriya S."/>
            <person name="Momiyama H."/>
            <person name="Satoh N."/>
            <person name="Takami S."/>
            <person name="Terashima Y."/>
            <person name="Suzuki O."/>
            <person name="Nakagawa S."/>
            <person name="Senoh A."/>
            <person name="Mizoguchi H."/>
            <person name="Goto Y."/>
            <person name="Shimizu F."/>
            <person name="Wakebe H."/>
            <person name="Hishigaki H."/>
            <person name="Watanabe T."/>
            <person name="Sugiyama A."/>
            <person name="Takemoto M."/>
            <person name="Kawakami B."/>
            <person name="Yamazaki M."/>
            <person name="Watanabe K."/>
            <person name="Kumagai A."/>
            <person name="Itakura S."/>
            <person name="Fukuzumi Y."/>
            <person name="Fujimori Y."/>
            <person name="Komiyama M."/>
            <person name="Tashiro H."/>
            <person name="Tanigami A."/>
            <person name="Fujiwara T."/>
            <person name="Ono T."/>
            <person name="Yamada K."/>
            <person name="Fujii Y."/>
            <person name="Ozaki K."/>
            <person name="Hirao M."/>
            <person name="Ohmori Y."/>
            <person name="Kawabata A."/>
            <person name="Hikiji T."/>
            <person name="Kobatake N."/>
            <person name="Inagaki H."/>
            <person name="Ikema Y."/>
            <person name="Okamoto S."/>
            <person name="Okitani R."/>
            <person name="Kawakami T."/>
            <person name="Noguchi S."/>
            <person name="Itoh T."/>
            <person name="Shigeta K."/>
            <person name="Senba T."/>
            <person name="Matsumura K."/>
            <person name="Nakajima Y."/>
            <person name="Mizuno T."/>
            <person name="Morinaga M."/>
            <person name="Sasaki M."/>
            <person name="Togashi T."/>
            <person name="Oyama M."/>
            <person name="Hata H."/>
            <person name="Watanabe M."/>
            <person name="Komatsu T."/>
            <person name="Mizushima-Sugano J."/>
            <person name="Satoh T."/>
            <person name="Shirai Y."/>
            <person name="Takahashi Y."/>
            <person name="Nakagawa K."/>
            <person name="Okumura K."/>
            <person name="Nagase T."/>
            <person name="Nomura N."/>
            <person name="Kikuchi H."/>
            <person name="Masuho Y."/>
            <person name="Yamashita R."/>
            <person name="Nakai K."/>
            <person name="Yada T."/>
            <person name="Nakamura Y."/>
            <person name="Ohara O."/>
            <person name="Isogai T."/>
            <person name="Sugano S."/>
        </authorList>
    </citation>
    <scope>NUCLEOTIDE SEQUENCE [LARGE SCALE MRNA]</scope>
    <source>
        <tissue>Testis</tissue>
    </source>
</reference>
<reference key="4">
    <citation type="journal article" date="2001" name="Nature">
        <title>The DNA sequence and comparative analysis of human chromosome 20.</title>
        <authorList>
            <person name="Deloukas P."/>
            <person name="Matthews L.H."/>
            <person name="Ashurst J.L."/>
            <person name="Burton J."/>
            <person name="Gilbert J.G.R."/>
            <person name="Jones M."/>
            <person name="Stavrides G."/>
            <person name="Almeida J.P."/>
            <person name="Babbage A.K."/>
            <person name="Bagguley C.L."/>
            <person name="Bailey J."/>
            <person name="Barlow K.F."/>
            <person name="Bates K.N."/>
            <person name="Beard L.M."/>
            <person name="Beare D.M."/>
            <person name="Beasley O.P."/>
            <person name="Bird C.P."/>
            <person name="Blakey S.E."/>
            <person name="Bridgeman A.M."/>
            <person name="Brown A.J."/>
            <person name="Buck D."/>
            <person name="Burrill W.D."/>
            <person name="Butler A.P."/>
            <person name="Carder C."/>
            <person name="Carter N.P."/>
            <person name="Chapman J.C."/>
            <person name="Clamp M."/>
            <person name="Clark G."/>
            <person name="Clark L.N."/>
            <person name="Clark S.Y."/>
            <person name="Clee C.M."/>
            <person name="Clegg S."/>
            <person name="Cobley V.E."/>
            <person name="Collier R.E."/>
            <person name="Connor R.E."/>
            <person name="Corby N.R."/>
            <person name="Coulson A."/>
            <person name="Coville G.J."/>
            <person name="Deadman R."/>
            <person name="Dhami P.D."/>
            <person name="Dunn M."/>
            <person name="Ellington A.G."/>
            <person name="Frankland J.A."/>
            <person name="Fraser A."/>
            <person name="French L."/>
            <person name="Garner P."/>
            <person name="Grafham D.V."/>
            <person name="Griffiths C."/>
            <person name="Griffiths M.N.D."/>
            <person name="Gwilliam R."/>
            <person name="Hall R.E."/>
            <person name="Hammond S."/>
            <person name="Harley J.L."/>
            <person name="Heath P.D."/>
            <person name="Ho S."/>
            <person name="Holden J.L."/>
            <person name="Howden P.J."/>
            <person name="Huckle E."/>
            <person name="Hunt A.R."/>
            <person name="Hunt S.E."/>
            <person name="Jekosch K."/>
            <person name="Johnson C.M."/>
            <person name="Johnson D."/>
            <person name="Kay M.P."/>
            <person name="Kimberley A.M."/>
            <person name="King A."/>
            <person name="Knights A."/>
            <person name="Laird G.K."/>
            <person name="Lawlor S."/>
            <person name="Lehvaeslaiho M.H."/>
            <person name="Leversha M.A."/>
            <person name="Lloyd C."/>
            <person name="Lloyd D.M."/>
            <person name="Lovell J.D."/>
            <person name="Marsh V.L."/>
            <person name="Martin S.L."/>
            <person name="McConnachie L.J."/>
            <person name="McLay K."/>
            <person name="McMurray A.A."/>
            <person name="Milne S.A."/>
            <person name="Mistry D."/>
            <person name="Moore M.J.F."/>
            <person name="Mullikin J.C."/>
            <person name="Nickerson T."/>
            <person name="Oliver K."/>
            <person name="Parker A."/>
            <person name="Patel R."/>
            <person name="Pearce T.A.V."/>
            <person name="Peck A.I."/>
            <person name="Phillimore B.J.C.T."/>
            <person name="Prathalingam S.R."/>
            <person name="Plumb R.W."/>
            <person name="Ramsay H."/>
            <person name="Rice C.M."/>
            <person name="Ross M.T."/>
            <person name="Scott C.E."/>
            <person name="Sehra H.K."/>
            <person name="Shownkeen R."/>
            <person name="Sims S."/>
            <person name="Skuce C.D."/>
            <person name="Smith M.L."/>
            <person name="Soderlund C."/>
            <person name="Steward C.A."/>
            <person name="Sulston J.E."/>
            <person name="Swann R.M."/>
            <person name="Sycamore N."/>
            <person name="Taylor R."/>
            <person name="Tee L."/>
            <person name="Thomas D.W."/>
            <person name="Thorpe A."/>
            <person name="Tracey A."/>
            <person name="Tromans A.C."/>
            <person name="Vaudin M."/>
            <person name="Wall M."/>
            <person name="Wallis J.M."/>
            <person name="Whitehead S.L."/>
            <person name="Whittaker P."/>
            <person name="Willey D.L."/>
            <person name="Williams L."/>
            <person name="Williams S.A."/>
            <person name="Wilming L."/>
            <person name="Wray P.W."/>
            <person name="Hubbard T."/>
            <person name="Durbin R.M."/>
            <person name="Bentley D.R."/>
            <person name="Beck S."/>
            <person name="Rogers J."/>
        </authorList>
    </citation>
    <scope>NUCLEOTIDE SEQUENCE [LARGE SCALE GENOMIC DNA]</scope>
</reference>
<reference key="5">
    <citation type="submission" date="2005-09" db="EMBL/GenBank/DDBJ databases">
        <authorList>
            <person name="Mural R.J."/>
            <person name="Istrail S."/>
            <person name="Sutton G.G."/>
            <person name="Florea L."/>
            <person name="Halpern A.L."/>
            <person name="Mobarry C.M."/>
            <person name="Lippert R."/>
            <person name="Walenz B."/>
            <person name="Shatkay H."/>
            <person name="Dew I."/>
            <person name="Miller J.R."/>
            <person name="Flanigan M.J."/>
            <person name="Edwards N.J."/>
            <person name="Bolanos R."/>
            <person name="Fasulo D."/>
            <person name="Halldorsson B.V."/>
            <person name="Hannenhalli S."/>
            <person name="Turner R."/>
            <person name="Yooseph S."/>
            <person name="Lu F."/>
            <person name="Nusskern D.R."/>
            <person name="Shue B.C."/>
            <person name="Zheng X.H."/>
            <person name="Zhong F."/>
            <person name="Delcher A.L."/>
            <person name="Huson D.H."/>
            <person name="Kravitz S.A."/>
            <person name="Mouchard L."/>
            <person name="Reinert K."/>
            <person name="Remington K.A."/>
            <person name="Clark A.G."/>
            <person name="Waterman M.S."/>
            <person name="Eichler E.E."/>
            <person name="Adams M.D."/>
            <person name="Hunkapiller M.W."/>
            <person name="Myers E.W."/>
            <person name="Venter J.C."/>
        </authorList>
    </citation>
    <scope>NUCLEOTIDE SEQUENCE [LARGE SCALE GENOMIC DNA]</scope>
</reference>
<reference key="6">
    <citation type="journal article" date="2004" name="Genome Res.">
        <title>The status, quality, and expansion of the NIH full-length cDNA project: the Mammalian Gene Collection (MGC).</title>
        <authorList>
            <consortium name="The MGC Project Team"/>
        </authorList>
    </citation>
    <scope>NUCLEOTIDE SEQUENCE [LARGE SCALE MRNA]</scope>
    <source>
        <tissue>Eye</tissue>
    </source>
</reference>
<reference key="7">
    <citation type="journal article" date="2008" name="Proc. Natl. Acad. Sci. U.S.A.">
        <title>A quantitative atlas of mitotic phosphorylation.</title>
        <authorList>
            <person name="Dephoure N."/>
            <person name="Zhou C."/>
            <person name="Villen J."/>
            <person name="Beausoleil S.A."/>
            <person name="Bakalarski C.E."/>
            <person name="Elledge S.J."/>
            <person name="Gygi S.P."/>
        </authorList>
    </citation>
    <scope>PHOSPHORYLATION [LARGE SCALE ANALYSIS] AT SER-14</scope>
    <scope>IDENTIFICATION BY MASS SPECTROMETRY [LARGE SCALE ANALYSIS]</scope>
    <source>
        <tissue>Cervix carcinoma</tissue>
    </source>
</reference>
<reference key="8">
    <citation type="journal article" date="2009" name="Autophagy">
        <title>TP53INP2 is the new guest at the table of self-eating.</title>
        <authorList>
            <person name="Nowak J."/>
            <person name="Iovanna J.L."/>
        </authorList>
    </citation>
    <scope>REVIEW ON FUNCTION</scope>
</reference>
<reference key="9">
    <citation type="journal article" date="2009" name="Mol. Biol. Cell">
        <title>The TP53INP2 protein is required for autophagy in mammalian cells.</title>
        <authorList>
            <person name="Nowak J."/>
            <person name="Archange C."/>
            <person name="Tardivel-Lacombe J."/>
            <person name="Pontarotti P."/>
            <person name="Pebusque M.J."/>
            <person name="Vaccaro M.I."/>
            <person name="Velasco G."/>
            <person name="Dagorn J.C."/>
            <person name="Iovanna J.L."/>
        </authorList>
    </citation>
    <scope>FUNCTION</scope>
    <scope>SUBCELLULAR LOCATION</scope>
    <scope>INTERACTION WITH VMP1; GABARAP; GABARAPL2 AND MAP1LC3A</scope>
</reference>
<reference key="10">
    <citation type="journal article" date="2012" name="PLoS ONE">
        <title>DOR/Tp53inp2 and Tp53inp1 constitute a metazoan gene family encoding dual regulators of autophagy and transcription.</title>
        <authorList>
            <person name="Sancho A."/>
            <person name="Duran J."/>
            <person name="Garcia-Espana A."/>
            <person name="Mauvezin C."/>
            <person name="Alemu E.A."/>
            <person name="Lamark T."/>
            <person name="Macias M.J."/>
            <person name="Desalle R."/>
            <person name="Royo M."/>
            <person name="Sala D."/>
            <person name="Chicote J.U."/>
            <person name="Palacin M."/>
            <person name="Johansen T."/>
            <person name="Zorzano A."/>
        </authorList>
    </citation>
    <scope>FUNCTION</scope>
    <scope>SUBCELLULAR LOCATION</scope>
    <scope>INTERACTION WITH GABARAP; GABARAPL1; GABARAPL2; MAP1LC3A; MAP1LC3B AND MAP1LC3C</scope>
</reference>
<reference key="11">
    <citation type="journal article" date="2014" name="J. Proteomics">
        <title>An enzyme assisted RP-RPLC approach for in-depth analysis of human liver phosphoproteome.</title>
        <authorList>
            <person name="Bian Y."/>
            <person name="Song C."/>
            <person name="Cheng K."/>
            <person name="Dong M."/>
            <person name="Wang F."/>
            <person name="Huang J."/>
            <person name="Sun D."/>
            <person name="Wang L."/>
            <person name="Ye M."/>
            <person name="Zou H."/>
        </authorList>
    </citation>
    <scope>PHOSPHORYLATION [LARGE SCALE ANALYSIS] AT SER-136</scope>
    <scope>IDENTIFICATION BY MASS SPECTROMETRY [LARGE SCALE ANALYSIS]</scope>
    <source>
        <tissue>Liver</tissue>
    </source>
</reference>
<gene>
    <name type="primary">TP53INP2</name>
    <name type="synonym">C20orf110</name>
    <name type="synonym">DOR</name>
    <name type="synonym">PINH</name>
</gene>
<protein>
    <recommendedName>
        <fullName>Tumor protein p53-inducible nuclear protein 2</fullName>
    </recommendedName>
    <alternativeName>
        <fullName>Diabetes and obesity-regulated gene</fullName>
    </alternativeName>
    <alternativeName>
        <fullName>p53-inducible protein U</fullName>
        <shortName>PIG-U</shortName>
    </alternativeName>
</protein>
<sequence>MFQRLSSLFFSTPSPPEDPDCPRAFVSEEDEVDGWLIIDLPDSYAAPPSPGAAPAPAGRPPPAPSLMDESWFVTPPACFTAEGPGLGPARLQSSPLEDLLIEHPSMSVYVTGSTIVLEPGSPSPLPDAALPDGDLSEGELTPARREPRAARHAAPLPARAALLEKAGQVRRLQRARQRAERHALSAKAVQRQNRARESRPRRSKNQSSFIYQPCQRQFNY</sequence>
<keyword id="KW-0002">3D-structure</keyword>
<keyword id="KW-0010">Activator</keyword>
<keyword id="KW-0072">Autophagy</keyword>
<keyword id="KW-0963">Cytoplasm</keyword>
<keyword id="KW-0968">Cytoplasmic vesicle</keyword>
<keyword id="KW-0539">Nucleus</keyword>
<keyword id="KW-0597">Phosphoprotein</keyword>
<keyword id="KW-1267">Proteomics identification</keyword>
<keyword id="KW-1185">Reference proteome</keyword>
<keyword id="KW-0804">Transcription</keyword>
<keyword id="KW-0805">Transcription regulation</keyword>
<proteinExistence type="evidence at protein level"/>
<name>T53I2_HUMAN</name>
<organism>
    <name type="scientific">Homo sapiens</name>
    <name type="common">Human</name>
    <dbReference type="NCBI Taxonomy" id="9606"/>
    <lineage>
        <taxon>Eukaryota</taxon>
        <taxon>Metazoa</taxon>
        <taxon>Chordata</taxon>
        <taxon>Craniata</taxon>
        <taxon>Vertebrata</taxon>
        <taxon>Euteleostomi</taxon>
        <taxon>Mammalia</taxon>
        <taxon>Eutheria</taxon>
        <taxon>Euarchontoglires</taxon>
        <taxon>Primates</taxon>
        <taxon>Haplorrhini</taxon>
        <taxon>Catarrhini</taxon>
        <taxon>Hominidae</taxon>
        <taxon>Homo</taxon>
    </lineage>
</organism>
<comment type="function">
    <text evidence="2 3 4">Dual regulator of transcription and autophagy. Positively regulates autophagy and is required for autophagosome formation and processing. May act as a scaffold protein that recruits MAP1LC3A, GABARAP and GABARAPL2 and brings them to the autophagosome membrane by interacting with VMP1 where, in cooperation with the BECN1-PI3-kinase class III complex, they trigger autophagosome development. Acts as a transcriptional activator of THRA.</text>
</comment>
<comment type="subunit">
    <text evidence="2 3 4">Interacts with VMP1, GABARAP, GABARAPL1, GABARAPL2, MAP1LC3A, MAP1LC3B, MAP1LC3C and THRA.</text>
</comment>
<comment type="subcellular location">
    <subcellularLocation>
        <location>Cytoplasm</location>
        <location>Cytosol</location>
    </subcellularLocation>
    <subcellularLocation>
        <location>Nucleus</location>
    </subcellularLocation>
    <subcellularLocation>
        <location>Nucleus</location>
        <location>PML body</location>
    </subcellularLocation>
    <subcellularLocation>
        <location>Cytoplasmic vesicle</location>
        <location>Autophagosome</location>
    </subcellularLocation>
    <text>Shuttles between the nucleus and the cytoplasm, depending on cellular stress conditions, and re-localizes to autophagosomes on autophagy activation.</text>
</comment>
<comment type="domain">
    <text>The LC3 interacting region (LIR) motif mediates interaction with GABARAP, GABARAPL1, GABARAPL2, MAP1LC3A, MAP1LC3B and MAP1LC3C.</text>
</comment>